<organism>
    <name type="scientific">Kineococcus radiotolerans (strain ATCC BAA-149 / DSM 14245 / SRS30216)</name>
    <dbReference type="NCBI Taxonomy" id="266940"/>
    <lineage>
        <taxon>Bacteria</taxon>
        <taxon>Bacillati</taxon>
        <taxon>Actinomycetota</taxon>
        <taxon>Actinomycetes</taxon>
        <taxon>Kineosporiales</taxon>
        <taxon>Kineosporiaceae</taxon>
        <taxon>Kineococcus</taxon>
    </lineage>
</organism>
<dbReference type="EC" id="6.3.4.16" evidence="1"/>
<dbReference type="EC" id="6.3.5.5" evidence="1"/>
<dbReference type="EMBL" id="CP000750">
    <property type="protein sequence ID" value="ABS04465.1"/>
    <property type="molecule type" value="Genomic_DNA"/>
</dbReference>
<dbReference type="RefSeq" id="WP_012087288.1">
    <property type="nucleotide sequence ID" value="NC_009664.2"/>
</dbReference>
<dbReference type="SMR" id="A6WCC6"/>
<dbReference type="STRING" id="266940.Krad_3001"/>
<dbReference type="KEGG" id="kra:Krad_3001"/>
<dbReference type="eggNOG" id="COG0458">
    <property type="taxonomic scope" value="Bacteria"/>
</dbReference>
<dbReference type="HOGENOM" id="CLU_000513_1_3_11"/>
<dbReference type="OrthoDB" id="9804197at2"/>
<dbReference type="UniPathway" id="UPA00068">
    <property type="reaction ID" value="UER00171"/>
</dbReference>
<dbReference type="UniPathway" id="UPA00070">
    <property type="reaction ID" value="UER00115"/>
</dbReference>
<dbReference type="Proteomes" id="UP000001116">
    <property type="component" value="Chromosome"/>
</dbReference>
<dbReference type="GO" id="GO:0005737">
    <property type="term" value="C:cytoplasm"/>
    <property type="evidence" value="ECO:0007669"/>
    <property type="project" value="TreeGrafter"/>
</dbReference>
<dbReference type="GO" id="GO:0005524">
    <property type="term" value="F:ATP binding"/>
    <property type="evidence" value="ECO:0007669"/>
    <property type="project" value="UniProtKB-UniRule"/>
</dbReference>
<dbReference type="GO" id="GO:0004087">
    <property type="term" value="F:carbamoyl-phosphate synthase (ammonia) activity"/>
    <property type="evidence" value="ECO:0007669"/>
    <property type="project" value="RHEA"/>
</dbReference>
<dbReference type="GO" id="GO:0004088">
    <property type="term" value="F:carbamoyl-phosphate synthase (glutamine-hydrolyzing) activity"/>
    <property type="evidence" value="ECO:0007669"/>
    <property type="project" value="UniProtKB-UniRule"/>
</dbReference>
<dbReference type="GO" id="GO:0046872">
    <property type="term" value="F:metal ion binding"/>
    <property type="evidence" value="ECO:0007669"/>
    <property type="project" value="UniProtKB-KW"/>
</dbReference>
<dbReference type="GO" id="GO:0044205">
    <property type="term" value="P:'de novo' UMP biosynthetic process"/>
    <property type="evidence" value="ECO:0007669"/>
    <property type="project" value="UniProtKB-UniRule"/>
</dbReference>
<dbReference type="GO" id="GO:0006541">
    <property type="term" value="P:glutamine metabolic process"/>
    <property type="evidence" value="ECO:0007669"/>
    <property type="project" value="TreeGrafter"/>
</dbReference>
<dbReference type="GO" id="GO:0006526">
    <property type="term" value="P:L-arginine biosynthetic process"/>
    <property type="evidence" value="ECO:0007669"/>
    <property type="project" value="UniProtKB-UniRule"/>
</dbReference>
<dbReference type="CDD" id="cd01424">
    <property type="entry name" value="MGS_CPS_II"/>
    <property type="match status" value="1"/>
</dbReference>
<dbReference type="FunFam" id="1.10.1030.10:FF:000002">
    <property type="entry name" value="Carbamoyl-phosphate synthase large chain"/>
    <property type="match status" value="1"/>
</dbReference>
<dbReference type="FunFam" id="3.30.1490.20:FF:000001">
    <property type="entry name" value="Carbamoyl-phosphate synthase large chain"/>
    <property type="match status" value="1"/>
</dbReference>
<dbReference type="FunFam" id="3.30.470.20:FF:000007">
    <property type="entry name" value="Carbamoyl-phosphate synthase large chain"/>
    <property type="match status" value="1"/>
</dbReference>
<dbReference type="FunFam" id="3.30.470.20:FF:000014">
    <property type="entry name" value="Carbamoyl-phosphate synthase large chain"/>
    <property type="match status" value="1"/>
</dbReference>
<dbReference type="FunFam" id="3.40.50.20:FF:000001">
    <property type="entry name" value="Carbamoyl-phosphate synthase large chain"/>
    <property type="match status" value="1"/>
</dbReference>
<dbReference type="FunFam" id="3.40.50.20:FF:000003">
    <property type="entry name" value="Carbamoyl-phosphate synthase large chain"/>
    <property type="match status" value="1"/>
</dbReference>
<dbReference type="Gene3D" id="3.40.50.20">
    <property type="match status" value="2"/>
</dbReference>
<dbReference type="Gene3D" id="3.30.1490.20">
    <property type="entry name" value="ATP-grasp fold, A domain"/>
    <property type="match status" value="1"/>
</dbReference>
<dbReference type="Gene3D" id="3.30.470.20">
    <property type="entry name" value="ATP-grasp fold, B domain"/>
    <property type="match status" value="2"/>
</dbReference>
<dbReference type="Gene3D" id="1.10.1030.10">
    <property type="entry name" value="Carbamoyl-phosphate synthetase, large subunit oligomerisation domain"/>
    <property type="match status" value="1"/>
</dbReference>
<dbReference type="Gene3D" id="3.40.50.1380">
    <property type="entry name" value="Methylglyoxal synthase-like domain"/>
    <property type="match status" value="1"/>
</dbReference>
<dbReference type="HAMAP" id="MF_01210_B">
    <property type="entry name" value="CPSase_L_chain_B"/>
    <property type="match status" value="1"/>
</dbReference>
<dbReference type="InterPro" id="IPR011761">
    <property type="entry name" value="ATP-grasp"/>
</dbReference>
<dbReference type="InterPro" id="IPR013815">
    <property type="entry name" value="ATP_grasp_subdomain_1"/>
</dbReference>
<dbReference type="InterPro" id="IPR006275">
    <property type="entry name" value="CarbamoylP_synth_lsu"/>
</dbReference>
<dbReference type="InterPro" id="IPR005480">
    <property type="entry name" value="CarbamoylP_synth_lsu_oligo"/>
</dbReference>
<dbReference type="InterPro" id="IPR036897">
    <property type="entry name" value="CarbamoylP_synth_lsu_oligo_sf"/>
</dbReference>
<dbReference type="InterPro" id="IPR005479">
    <property type="entry name" value="CbamoylP_synth_lsu-like_ATP-bd"/>
</dbReference>
<dbReference type="InterPro" id="IPR005483">
    <property type="entry name" value="CbamoylP_synth_lsu_CPSase_dom"/>
</dbReference>
<dbReference type="InterPro" id="IPR011607">
    <property type="entry name" value="MGS-like_dom"/>
</dbReference>
<dbReference type="InterPro" id="IPR036914">
    <property type="entry name" value="MGS-like_dom_sf"/>
</dbReference>
<dbReference type="InterPro" id="IPR033937">
    <property type="entry name" value="MGS_CPS_CarB"/>
</dbReference>
<dbReference type="InterPro" id="IPR016185">
    <property type="entry name" value="PreATP-grasp_dom_sf"/>
</dbReference>
<dbReference type="NCBIfam" id="TIGR01369">
    <property type="entry name" value="CPSaseII_lrg"/>
    <property type="match status" value="1"/>
</dbReference>
<dbReference type="NCBIfam" id="NF003671">
    <property type="entry name" value="PRK05294.1"/>
    <property type="match status" value="1"/>
</dbReference>
<dbReference type="NCBIfam" id="NF009455">
    <property type="entry name" value="PRK12815.1"/>
    <property type="match status" value="1"/>
</dbReference>
<dbReference type="PANTHER" id="PTHR11405:SF53">
    <property type="entry name" value="CARBAMOYL-PHOSPHATE SYNTHASE [AMMONIA], MITOCHONDRIAL"/>
    <property type="match status" value="1"/>
</dbReference>
<dbReference type="PANTHER" id="PTHR11405">
    <property type="entry name" value="CARBAMOYLTRANSFERASE FAMILY MEMBER"/>
    <property type="match status" value="1"/>
</dbReference>
<dbReference type="Pfam" id="PF02786">
    <property type="entry name" value="CPSase_L_D2"/>
    <property type="match status" value="2"/>
</dbReference>
<dbReference type="Pfam" id="PF02787">
    <property type="entry name" value="CPSase_L_D3"/>
    <property type="match status" value="1"/>
</dbReference>
<dbReference type="Pfam" id="PF02142">
    <property type="entry name" value="MGS"/>
    <property type="match status" value="1"/>
</dbReference>
<dbReference type="PRINTS" id="PR00098">
    <property type="entry name" value="CPSASE"/>
</dbReference>
<dbReference type="SMART" id="SM01096">
    <property type="entry name" value="CPSase_L_D3"/>
    <property type="match status" value="1"/>
</dbReference>
<dbReference type="SMART" id="SM00851">
    <property type="entry name" value="MGS"/>
    <property type="match status" value="1"/>
</dbReference>
<dbReference type="SUPFAM" id="SSF48108">
    <property type="entry name" value="Carbamoyl phosphate synthetase, large subunit connection domain"/>
    <property type="match status" value="1"/>
</dbReference>
<dbReference type="SUPFAM" id="SSF56059">
    <property type="entry name" value="Glutathione synthetase ATP-binding domain-like"/>
    <property type="match status" value="2"/>
</dbReference>
<dbReference type="SUPFAM" id="SSF52335">
    <property type="entry name" value="Methylglyoxal synthase-like"/>
    <property type="match status" value="1"/>
</dbReference>
<dbReference type="SUPFAM" id="SSF52440">
    <property type="entry name" value="PreATP-grasp domain"/>
    <property type="match status" value="2"/>
</dbReference>
<dbReference type="PROSITE" id="PS50975">
    <property type="entry name" value="ATP_GRASP"/>
    <property type="match status" value="2"/>
</dbReference>
<dbReference type="PROSITE" id="PS00866">
    <property type="entry name" value="CPSASE_1"/>
    <property type="match status" value="2"/>
</dbReference>
<dbReference type="PROSITE" id="PS00867">
    <property type="entry name" value="CPSASE_2"/>
    <property type="match status" value="2"/>
</dbReference>
<dbReference type="PROSITE" id="PS51855">
    <property type="entry name" value="MGS"/>
    <property type="match status" value="1"/>
</dbReference>
<keyword id="KW-0028">Amino-acid biosynthesis</keyword>
<keyword id="KW-0055">Arginine biosynthesis</keyword>
<keyword id="KW-0067">ATP-binding</keyword>
<keyword id="KW-0436">Ligase</keyword>
<keyword id="KW-0460">Magnesium</keyword>
<keyword id="KW-0464">Manganese</keyword>
<keyword id="KW-0479">Metal-binding</keyword>
<keyword id="KW-0547">Nucleotide-binding</keyword>
<keyword id="KW-0665">Pyrimidine biosynthesis</keyword>
<keyword id="KW-1185">Reference proteome</keyword>
<keyword id="KW-0677">Repeat</keyword>
<sequence>MPRRTDLKSVLVIGSGPIVIGQAAEFDYSGTQACRVLRAEGLRVILVNSNPATIMTDPEMADATYVEPITPAVVEAIIAKERPDAVLATLGGQTALNTAIALYENGVLEKYGTELIGADVEAIKLGEDRQLFKGVVERCGAESARSHLCHSMEEVLAGAADLGYPVVVRPSFTMGGLGSGFAYDEADLRRIAGQGLHHSPVTEVLLEESILGWKEYELELMRDRADNVVVVCSIENFDPMGVHTGDSITVAPAMTLTDREYQRMRDIGIAVIREVGVDTGGCNIQFAVNPEDGRIIVIEMNPRVSRSSALASKATGFPIAKIAARLAVGYTLDEIPNDITSSTPASFEPTLDYVVVKVPRFAFEKFPAADPTLTTTMKSVGEAMALGRNFTEALQKALRSTEKRGATFSWAGEPGDRADLLRRAAQPTDERIGLVMQAIRAGATPEELFESTRIDPWFLDQMFLLDEIAGEVRDSDELTPELLRHAKRHGFSDAQIGELRHLPEDVVRGVRHALGIRPVYKTVDTCAAEFAASTPYHYSSYDEEDETRPREKAAIVILGSGPNRIGQGVEFDYSCVHASFALRDAGYETVMVNCNPETVSTDYDTSDRLYFEPLTLEDVLEVVHAEMRCGPVAGVIVQLGGQTPLGLAAKLEQAGVPIIGTSPQAIDLAEERGAFGQVLERAGLVAPKHGTASSFPGAKAIAAGIGYPVLVRPSYVLGGRGMQIVYDEASLEEYMRTATEVSPERPVLVDRFLDDAIEIDVDALFDGEEMYLGGIMEHIEEAGIHSGDSACVIPPPTLGNAELARVRAATEAIARGVGVRGLLNVQFALAADVLYVLEANPRASRTVPFVSKATGVALAKAAARLMAGTSIRDLRAEGLLPGRGDGGLLPADSPVSVKEAVLPFARFRTAEGVVVDSLLGPEMRSTGEVMGIDVDFPTAFGKSQTAAYGGLPTAGTAFISVADRDKRAMIFPIKRLADLGFTLVATEGTAQVLRRNGITSTVVRKHSEGTSEDGELTIVGRIGAGEIAMVVNTPSGNQARADGYEIRAAATAVGSPIITTIQELSAAVQAIEAAIVQERNGGGVNVASLQEHTARLNAAWEGRA</sequence>
<evidence type="ECO:0000255" key="1">
    <source>
        <dbReference type="HAMAP-Rule" id="MF_01210"/>
    </source>
</evidence>
<gene>
    <name evidence="1" type="primary">carB</name>
    <name type="ordered locus">Krad_3001</name>
</gene>
<comment type="function">
    <text evidence="1">Large subunit of the glutamine-dependent carbamoyl phosphate synthetase (CPSase). CPSase catalyzes the formation of carbamoyl phosphate from the ammonia moiety of glutamine, carbonate, and phosphate donated by ATP, constituting the first step of 2 biosynthetic pathways, one leading to arginine and/or urea and the other to pyrimidine nucleotides. The large subunit (synthetase) binds the substrates ammonia (free or transferred from glutamine from the small subunit), hydrogencarbonate and ATP and carries out an ATP-coupled ligase reaction, activating hydrogencarbonate by forming carboxy phosphate which reacts with ammonia to form carbamoyl phosphate.</text>
</comment>
<comment type="catalytic activity">
    <reaction evidence="1">
        <text>hydrogencarbonate + L-glutamine + 2 ATP + H2O = carbamoyl phosphate + L-glutamate + 2 ADP + phosphate + 2 H(+)</text>
        <dbReference type="Rhea" id="RHEA:18633"/>
        <dbReference type="ChEBI" id="CHEBI:15377"/>
        <dbReference type="ChEBI" id="CHEBI:15378"/>
        <dbReference type="ChEBI" id="CHEBI:17544"/>
        <dbReference type="ChEBI" id="CHEBI:29985"/>
        <dbReference type="ChEBI" id="CHEBI:30616"/>
        <dbReference type="ChEBI" id="CHEBI:43474"/>
        <dbReference type="ChEBI" id="CHEBI:58228"/>
        <dbReference type="ChEBI" id="CHEBI:58359"/>
        <dbReference type="ChEBI" id="CHEBI:456216"/>
        <dbReference type="EC" id="6.3.5.5"/>
    </reaction>
</comment>
<comment type="catalytic activity">
    <molecule>Carbamoyl phosphate synthase large chain</molecule>
    <reaction evidence="1">
        <text>hydrogencarbonate + NH4(+) + 2 ATP = carbamoyl phosphate + 2 ADP + phosphate + 2 H(+)</text>
        <dbReference type="Rhea" id="RHEA:18029"/>
        <dbReference type="ChEBI" id="CHEBI:15378"/>
        <dbReference type="ChEBI" id="CHEBI:17544"/>
        <dbReference type="ChEBI" id="CHEBI:28938"/>
        <dbReference type="ChEBI" id="CHEBI:30616"/>
        <dbReference type="ChEBI" id="CHEBI:43474"/>
        <dbReference type="ChEBI" id="CHEBI:58228"/>
        <dbReference type="ChEBI" id="CHEBI:456216"/>
        <dbReference type="EC" id="6.3.4.16"/>
    </reaction>
</comment>
<comment type="cofactor">
    <cofactor evidence="1">
        <name>Mg(2+)</name>
        <dbReference type="ChEBI" id="CHEBI:18420"/>
    </cofactor>
    <cofactor evidence="1">
        <name>Mn(2+)</name>
        <dbReference type="ChEBI" id="CHEBI:29035"/>
    </cofactor>
    <text evidence="1">Binds 4 Mg(2+) or Mn(2+) ions per subunit.</text>
</comment>
<comment type="pathway">
    <text evidence="1">Amino-acid biosynthesis; L-arginine biosynthesis; carbamoyl phosphate from bicarbonate: step 1/1.</text>
</comment>
<comment type="pathway">
    <text evidence="1">Pyrimidine metabolism; UMP biosynthesis via de novo pathway; (S)-dihydroorotate from bicarbonate: step 1/3.</text>
</comment>
<comment type="subunit">
    <text evidence="1">Composed of two chains; the small (or glutamine) chain promotes the hydrolysis of glutamine to ammonia, which is used by the large (or ammonia) chain to synthesize carbamoyl phosphate. Tetramer of heterodimers (alpha,beta)4.</text>
</comment>
<comment type="domain">
    <text evidence="1">The large subunit is composed of 2 ATP-grasp domains that are involved in binding the 2 ATP molecules needed for carbamoyl phosphate synthesis. The N-terminal ATP-grasp domain (referred to as the carboxyphosphate synthetic component) catalyzes the ATP-dependent phosphorylation of hydrogencarbonate to carboxyphosphate and the subsequent nucleophilic attack by ammonia to form a carbamate intermediate. The C-terminal ATP-grasp domain (referred to as the carbamoyl phosphate synthetic component) then catalyzes the phosphorylation of carbamate with the second ATP to form the end product carbamoyl phosphate. The reactive and unstable enzyme intermediates are sequentially channeled from one active site to the next through the interior of the protein over a distance of at least 96 A.</text>
</comment>
<comment type="similarity">
    <text evidence="1">Belongs to the CarB family.</text>
</comment>
<protein>
    <recommendedName>
        <fullName evidence="1">Carbamoyl phosphate synthase large chain</fullName>
        <ecNumber evidence="1">6.3.4.16</ecNumber>
        <ecNumber evidence="1">6.3.5.5</ecNumber>
    </recommendedName>
    <alternativeName>
        <fullName evidence="1">Carbamoyl phosphate synthetase ammonia chain</fullName>
    </alternativeName>
</protein>
<proteinExistence type="inferred from homology"/>
<name>CARB_KINRD</name>
<feature type="chain" id="PRO_1000085558" description="Carbamoyl phosphate synthase large chain">
    <location>
        <begin position="1"/>
        <end position="1104"/>
    </location>
</feature>
<feature type="domain" description="ATP-grasp 1" evidence="1">
    <location>
        <begin position="133"/>
        <end position="328"/>
    </location>
</feature>
<feature type="domain" description="ATP-grasp 2" evidence="1">
    <location>
        <begin position="676"/>
        <end position="867"/>
    </location>
</feature>
<feature type="domain" description="MGS-like" evidence="1">
    <location>
        <begin position="949"/>
        <end position="1099"/>
    </location>
</feature>
<feature type="region of interest" description="Carboxyphosphate synthetic domain" evidence="1">
    <location>
        <begin position="1"/>
        <end position="402"/>
    </location>
</feature>
<feature type="region of interest" description="Oligomerization domain" evidence="1">
    <location>
        <begin position="403"/>
        <end position="547"/>
    </location>
</feature>
<feature type="region of interest" description="Carbamoyl phosphate synthetic domain" evidence="1">
    <location>
        <begin position="548"/>
        <end position="948"/>
    </location>
</feature>
<feature type="region of interest" description="Allosteric domain" evidence="1">
    <location>
        <begin position="949"/>
        <end position="1104"/>
    </location>
</feature>
<feature type="binding site" evidence="1">
    <location>
        <position position="129"/>
    </location>
    <ligand>
        <name>ATP</name>
        <dbReference type="ChEBI" id="CHEBI:30616"/>
        <label>1</label>
    </ligand>
</feature>
<feature type="binding site" evidence="1">
    <location>
        <position position="169"/>
    </location>
    <ligand>
        <name>ATP</name>
        <dbReference type="ChEBI" id="CHEBI:30616"/>
        <label>1</label>
    </ligand>
</feature>
<feature type="binding site" evidence="1">
    <location>
        <position position="175"/>
    </location>
    <ligand>
        <name>ATP</name>
        <dbReference type="ChEBI" id="CHEBI:30616"/>
        <label>1</label>
    </ligand>
</feature>
<feature type="binding site" evidence="1">
    <location>
        <position position="176"/>
    </location>
    <ligand>
        <name>ATP</name>
        <dbReference type="ChEBI" id="CHEBI:30616"/>
        <label>1</label>
    </ligand>
</feature>
<feature type="binding site" evidence="1">
    <location>
        <position position="208"/>
    </location>
    <ligand>
        <name>ATP</name>
        <dbReference type="ChEBI" id="CHEBI:30616"/>
        <label>1</label>
    </ligand>
</feature>
<feature type="binding site" evidence="1">
    <location>
        <position position="210"/>
    </location>
    <ligand>
        <name>ATP</name>
        <dbReference type="ChEBI" id="CHEBI:30616"/>
        <label>1</label>
    </ligand>
</feature>
<feature type="binding site" evidence="1">
    <location>
        <position position="215"/>
    </location>
    <ligand>
        <name>ATP</name>
        <dbReference type="ChEBI" id="CHEBI:30616"/>
        <label>1</label>
    </ligand>
</feature>
<feature type="binding site" evidence="1">
    <location>
        <position position="241"/>
    </location>
    <ligand>
        <name>ATP</name>
        <dbReference type="ChEBI" id="CHEBI:30616"/>
        <label>1</label>
    </ligand>
</feature>
<feature type="binding site" evidence="1">
    <location>
        <position position="242"/>
    </location>
    <ligand>
        <name>ATP</name>
        <dbReference type="ChEBI" id="CHEBI:30616"/>
        <label>1</label>
    </ligand>
</feature>
<feature type="binding site" evidence="1">
    <location>
        <position position="243"/>
    </location>
    <ligand>
        <name>ATP</name>
        <dbReference type="ChEBI" id="CHEBI:30616"/>
        <label>1</label>
    </ligand>
</feature>
<feature type="binding site" evidence="1">
    <location>
        <position position="285"/>
    </location>
    <ligand>
        <name>ATP</name>
        <dbReference type="ChEBI" id="CHEBI:30616"/>
        <label>1</label>
    </ligand>
</feature>
<feature type="binding site" evidence="1">
    <location>
        <position position="285"/>
    </location>
    <ligand>
        <name>Mg(2+)</name>
        <dbReference type="ChEBI" id="CHEBI:18420"/>
        <label>1</label>
    </ligand>
</feature>
<feature type="binding site" evidence="1">
    <location>
        <position position="285"/>
    </location>
    <ligand>
        <name>Mn(2+)</name>
        <dbReference type="ChEBI" id="CHEBI:29035"/>
        <label>1</label>
    </ligand>
</feature>
<feature type="binding site" evidence="1">
    <location>
        <position position="299"/>
    </location>
    <ligand>
        <name>ATP</name>
        <dbReference type="ChEBI" id="CHEBI:30616"/>
        <label>1</label>
    </ligand>
</feature>
<feature type="binding site" evidence="1">
    <location>
        <position position="299"/>
    </location>
    <ligand>
        <name>Mg(2+)</name>
        <dbReference type="ChEBI" id="CHEBI:18420"/>
        <label>1</label>
    </ligand>
</feature>
<feature type="binding site" evidence="1">
    <location>
        <position position="299"/>
    </location>
    <ligand>
        <name>Mg(2+)</name>
        <dbReference type="ChEBI" id="CHEBI:18420"/>
        <label>2</label>
    </ligand>
</feature>
<feature type="binding site" evidence="1">
    <location>
        <position position="299"/>
    </location>
    <ligand>
        <name>Mn(2+)</name>
        <dbReference type="ChEBI" id="CHEBI:29035"/>
        <label>1</label>
    </ligand>
</feature>
<feature type="binding site" evidence="1">
    <location>
        <position position="299"/>
    </location>
    <ligand>
        <name>Mn(2+)</name>
        <dbReference type="ChEBI" id="CHEBI:29035"/>
        <label>2</label>
    </ligand>
</feature>
<feature type="binding site" evidence="1">
    <location>
        <position position="301"/>
    </location>
    <ligand>
        <name>Mg(2+)</name>
        <dbReference type="ChEBI" id="CHEBI:18420"/>
        <label>2</label>
    </ligand>
</feature>
<feature type="binding site" evidence="1">
    <location>
        <position position="301"/>
    </location>
    <ligand>
        <name>Mn(2+)</name>
        <dbReference type="ChEBI" id="CHEBI:29035"/>
        <label>2</label>
    </ligand>
</feature>
<feature type="binding site" evidence="1">
    <location>
        <position position="712"/>
    </location>
    <ligand>
        <name>ATP</name>
        <dbReference type="ChEBI" id="CHEBI:30616"/>
        <label>2</label>
    </ligand>
</feature>
<feature type="binding site" evidence="1">
    <location>
        <position position="751"/>
    </location>
    <ligand>
        <name>ATP</name>
        <dbReference type="ChEBI" id="CHEBI:30616"/>
        <label>2</label>
    </ligand>
</feature>
<feature type="binding site" evidence="1">
    <location>
        <position position="753"/>
    </location>
    <ligand>
        <name>ATP</name>
        <dbReference type="ChEBI" id="CHEBI:30616"/>
        <label>2</label>
    </ligand>
</feature>
<feature type="binding site" evidence="1">
    <location>
        <position position="758"/>
    </location>
    <ligand>
        <name>ATP</name>
        <dbReference type="ChEBI" id="CHEBI:30616"/>
        <label>2</label>
    </ligand>
</feature>
<feature type="binding site" evidence="1">
    <location>
        <position position="783"/>
    </location>
    <ligand>
        <name>ATP</name>
        <dbReference type="ChEBI" id="CHEBI:30616"/>
        <label>2</label>
    </ligand>
</feature>
<feature type="binding site" evidence="1">
    <location>
        <position position="784"/>
    </location>
    <ligand>
        <name>ATP</name>
        <dbReference type="ChEBI" id="CHEBI:30616"/>
        <label>2</label>
    </ligand>
</feature>
<feature type="binding site" evidence="1">
    <location>
        <position position="785"/>
    </location>
    <ligand>
        <name>ATP</name>
        <dbReference type="ChEBI" id="CHEBI:30616"/>
        <label>2</label>
    </ligand>
</feature>
<feature type="binding site" evidence="1">
    <location>
        <position position="786"/>
    </location>
    <ligand>
        <name>ATP</name>
        <dbReference type="ChEBI" id="CHEBI:30616"/>
        <label>2</label>
    </ligand>
</feature>
<feature type="binding site" evidence="1">
    <location>
        <position position="826"/>
    </location>
    <ligand>
        <name>ATP</name>
        <dbReference type="ChEBI" id="CHEBI:30616"/>
        <label>2</label>
    </ligand>
</feature>
<feature type="binding site" evidence="1">
    <location>
        <position position="826"/>
    </location>
    <ligand>
        <name>Mg(2+)</name>
        <dbReference type="ChEBI" id="CHEBI:18420"/>
        <label>3</label>
    </ligand>
</feature>
<feature type="binding site" evidence="1">
    <location>
        <position position="826"/>
    </location>
    <ligand>
        <name>Mn(2+)</name>
        <dbReference type="ChEBI" id="CHEBI:29035"/>
        <label>3</label>
    </ligand>
</feature>
<feature type="binding site" evidence="1">
    <location>
        <position position="838"/>
    </location>
    <ligand>
        <name>ATP</name>
        <dbReference type="ChEBI" id="CHEBI:30616"/>
        <label>2</label>
    </ligand>
</feature>
<feature type="binding site" evidence="1">
    <location>
        <position position="838"/>
    </location>
    <ligand>
        <name>Mg(2+)</name>
        <dbReference type="ChEBI" id="CHEBI:18420"/>
        <label>3</label>
    </ligand>
</feature>
<feature type="binding site" evidence="1">
    <location>
        <position position="838"/>
    </location>
    <ligand>
        <name>Mg(2+)</name>
        <dbReference type="ChEBI" id="CHEBI:18420"/>
        <label>4</label>
    </ligand>
</feature>
<feature type="binding site" evidence="1">
    <location>
        <position position="838"/>
    </location>
    <ligand>
        <name>Mn(2+)</name>
        <dbReference type="ChEBI" id="CHEBI:29035"/>
        <label>3</label>
    </ligand>
</feature>
<feature type="binding site" evidence="1">
    <location>
        <position position="838"/>
    </location>
    <ligand>
        <name>Mn(2+)</name>
        <dbReference type="ChEBI" id="CHEBI:29035"/>
        <label>4</label>
    </ligand>
</feature>
<feature type="binding site" evidence="1">
    <location>
        <position position="840"/>
    </location>
    <ligand>
        <name>Mg(2+)</name>
        <dbReference type="ChEBI" id="CHEBI:18420"/>
        <label>4</label>
    </ligand>
</feature>
<feature type="binding site" evidence="1">
    <location>
        <position position="840"/>
    </location>
    <ligand>
        <name>Mn(2+)</name>
        <dbReference type="ChEBI" id="CHEBI:29035"/>
        <label>4</label>
    </ligand>
</feature>
<reference key="1">
    <citation type="journal article" date="2008" name="PLoS ONE">
        <title>Survival in nuclear waste, extreme resistance, and potential applications gleaned from the genome sequence of Kineococcus radiotolerans SRS30216.</title>
        <authorList>
            <person name="Bagwell C.E."/>
            <person name="Bhat S."/>
            <person name="Hawkins G.M."/>
            <person name="Smith B.W."/>
            <person name="Biswas T."/>
            <person name="Hoover T.R."/>
            <person name="Saunders E."/>
            <person name="Han C.S."/>
            <person name="Tsodikov O.V."/>
            <person name="Shimkets L.J."/>
        </authorList>
    </citation>
    <scope>NUCLEOTIDE SEQUENCE [LARGE SCALE GENOMIC DNA]</scope>
    <source>
        <strain>ATCC BAA-149 / DSM 14245 / SRS30216</strain>
    </source>
</reference>
<accession>A6WCC6</accession>